<comment type="function">
    <text evidence="1">Component of the cytochrome c oxidase, the last enzyme in the mitochondrial electron transport chain which drives oxidative phosphorylation. The respiratory chain contains 3 multisubunit complexes succinate dehydrogenase (complex II, CII), ubiquinol-cytochrome c oxidoreductase (cytochrome b-c1 complex, complex III, CIII) and cytochrome c oxidase (complex IV, CIV), that cooperate to transfer electrons derived from NADH and succinate to molecular oxygen, creating an electrochemical gradient over the inner membrane that drives transmembrane transport and the ATP synthase. Cytochrome c oxidase is the component of the respiratory chain that catalyzes the reduction of oxygen to water. Electrons originating from reduced cytochrome c in the intermembrane space (IMS) are transferred via the dinuclear copper A center (CU(A)) of subunit 2 and heme A of subunit 1 to the active site in subunit 1, a binuclear center (BNC) formed by heme A3 and copper B (CU(B)). The BNC reduces molecular oxygen to 2 water molecules using 4 electrons from cytochrome c in the IMS and 4 protons from the mitochondrial matrix.</text>
</comment>
<comment type="pathway">
    <text evidence="1">Energy metabolism; oxidative phosphorylation.</text>
</comment>
<comment type="subunit">
    <text evidence="5 6">Component of the cytochrome c oxidase (complex IV, CIV), a multisubunit enzyme composed of 14 subunits. The complex is composed of a catalytic core of 3 subunits MT-CO1, MT-CO2 and MT-CO3, encoded in the mitochondrial DNA, and 11 supernumerary subunits COX4I1 (or COX4I2), COX5A, COX5B, COX6A1 (or COX6A2), COX6B1 (or COX6B2), COX6C, COX7A2 (or COX7A1), COX7B, COX7C, COX8A and NDUFA4, which are encoded in the nuclear genome (PubMed:30030519). The complex exists as a monomer or a dimer and forms supercomplexes (SCs) in the inner mitochondrial membrane with NADH-ubiquinone oxidoreductase (complex I, CI) and ubiquinol-cytochrome c oxidoreductase (cytochrome b-c1 complex, complex III, CIII), resulting in different assemblies (supercomplex SCI(1)III(2)IV(1) and megacomplex MCI(2)III(2)IV(2)) (PubMed:28844695).</text>
</comment>
<comment type="subcellular location">
    <subcellularLocation>
        <location evidence="6">Mitochondrion inner membrane</location>
        <topology evidence="6">Peripheral membrane protein</topology>
        <orientation evidence="6">Intermembrane side</orientation>
    </subcellularLocation>
</comment>
<comment type="disease" evidence="3 4">
    <disease id="DI-05930">
        <name>Mitochondrial complex IV deficiency, nuclear type 7</name>
        <acronym>MC4DN7</acronym>
        <description>An autosomal recessive mitochondrial disorder characterized by encephalomyopathy resulting in variable clinical manifestations. Features include muscle weakness, gait disturbances, neurodegeneration, cognitive decline, metabolic acidosis, feeding difficulties, poor overall growth, cortical visual impairment, and hypertrophic cardiomyopathy. Serum lactate levels are increased. Patient tissues show decreased levels and activity of mitochondrial respiratory complex IV.</description>
        <dbReference type="MIM" id="619051"/>
    </disease>
    <text>The disease is caused by variants affecting the gene represented in this entry.</text>
</comment>
<comment type="similarity">
    <text evidence="7">Belongs to the cytochrome c oxidase subunit 6B family.</text>
</comment>
<gene>
    <name type="primary">COX6B1</name>
    <name type="synonym">COX6B</name>
</gene>
<accession>P14854</accession>
<accession>B2R5C9</accession>
<accession>Q6IBL4</accession>
<name>CX6B1_HUMAN</name>
<protein>
    <recommendedName>
        <fullName>Cytochrome c oxidase subunit 6B1</fullName>
    </recommendedName>
    <alternativeName>
        <fullName>Cytochrome c oxidase subunit VIb isoform 1</fullName>
        <shortName>COX VIb-1</shortName>
    </alternativeName>
</protein>
<proteinExistence type="evidence at protein level"/>
<sequence>MAEDMETKIKNYKTAPFDSRFPNQNQTRNCWQNYLDFHRCQKAMTAKGGDISVCEWYQRVYQSLCPTSWVTDWDEQRAEGTFPGKI</sequence>
<reference key="1">
    <citation type="journal article" date="1989" name="Nucleic Acids Res.">
        <title>Nucleotide sequence of cDNA encoding subunit VIb of human cytochrome c oxidase.</title>
        <authorList>
            <person name="Taanman J.-W."/>
            <person name="Schrage C."/>
            <person name="Ponne N.J."/>
            <person name="Bolhuis P.A."/>
            <person name="de Vries H."/>
            <person name="Agsteribbe E."/>
        </authorList>
    </citation>
    <scope>NUCLEOTIDE SEQUENCE [MRNA]</scope>
    <source>
        <tissue>Skeletal muscle</tissue>
    </source>
</reference>
<reference key="2">
    <citation type="journal article" date="1990" name="Gene">
        <title>Isolation of cDNAs encoding subunit VIb of cytochrome c oxidase and steady-state levels of coxVIb mRNA in different tissues.</title>
        <authorList>
            <person name="Taanman J.-W."/>
            <person name="Schrage C."/>
            <person name="Ponne N.J."/>
            <person name="Das A.T."/>
            <person name="Bolhuis P.A."/>
            <person name="de Vries H."/>
            <person name="Agsteribbe E."/>
        </authorList>
    </citation>
    <scope>NUCLEOTIDE SEQUENCE [MRNA]</scope>
</reference>
<reference key="3">
    <citation type="journal article" date="1991" name="Gene">
        <title>Human cytochrome c oxidase subunit VIb: characterization and mapping of a multigene family.</title>
        <authorList>
            <person name="Carrero-Valenzuela R.D."/>
            <person name="Quan F."/>
            <person name="Lightowlers R.N."/>
            <person name="Kennaway N.G."/>
            <person name="Litt M."/>
            <person name="Forte M.A."/>
        </authorList>
    </citation>
    <scope>NUCLEOTIDE SEQUENCE [MRNA]</scope>
</reference>
<reference key="4">
    <citation type="journal article" date="2004" name="Nat. Genet.">
        <title>Complete sequencing and characterization of 21,243 full-length human cDNAs.</title>
        <authorList>
            <person name="Ota T."/>
            <person name="Suzuki Y."/>
            <person name="Nishikawa T."/>
            <person name="Otsuki T."/>
            <person name="Sugiyama T."/>
            <person name="Irie R."/>
            <person name="Wakamatsu A."/>
            <person name="Hayashi K."/>
            <person name="Sato H."/>
            <person name="Nagai K."/>
            <person name="Kimura K."/>
            <person name="Makita H."/>
            <person name="Sekine M."/>
            <person name="Obayashi M."/>
            <person name="Nishi T."/>
            <person name="Shibahara T."/>
            <person name="Tanaka T."/>
            <person name="Ishii S."/>
            <person name="Yamamoto J."/>
            <person name="Saito K."/>
            <person name="Kawai Y."/>
            <person name="Isono Y."/>
            <person name="Nakamura Y."/>
            <person name="Nagahari K."/>
            <person name="Murakami K."/>
            <person name="Yasuda T."/>
            <person name="Iwayanagi T."/>
            <person name="Wagatsuma M."/>
            <person name="Shiratori A."/>
            <person name="Sudo H."/>
            <person name="Hosoiri T."/>
            <person name="Kaku Y."/>
            <person name="Kodaira H."/>
            <person name="Kondo H."/>
            <person name="Sugawara M."/>
            <person name="Takahashi M."/>
            <person name="Kanda K."/>
            <person name="Yokoi T."/>
            <person name="Furuya T."/>
            <person name="Kikkawa E."/>
            <person name="Omura Y."/>
            <person name="Abe K."/>
            <person name="Kamihara K."/>
            <person name="Katsuta N."/>
            <person name="Sato K."/>
            <person name="Tanikawa M."/>
            <person name="Yamazaki M."/>
            <person name="Ninomiya K."/>
            <person name="Ishibashi T."/>
            <person name="Yamashita H."/>
            <person name="Murakawa K."/>
            <person name="Fujimori K."/>
            <person name="Tanai H."/>
            <person name="Kimata M."/>
            <person name="Watanabe M."/>
            <person name="Hiraoka S."/>
            <person name="Chiba Y."/>
            <person name="Ishida S."/>
            <person name="Ono Y."/>
            <person name="Takiguchi S."/>
            <person name="Watanabe S."/>
            <person name="Yosida M."/>
            <person name="Hotuta T."/>
            <person name="Kusano J."/>
            <person name="Kanehori K."/>
            <person name="Takahashi-Fujii A."/>
            <person name="Hara H."/>
            <person name="Tanase T.-O."/>
            <person name="Nomura Y."/>
            <person name="Togiya S."/>
            <person name="Komai F."/>
            <person name="Hara R."/>
            <person name="Takeuchi K."/>
            <person name="Arita M."/>
            <person name="Imose N."/>
            <person name="Musashino K."/>
            <person name="Yuuki H."/>
            <person name="Oshima A."/>
            <person name="Sasaki N."/>
            <person name="Aotsuka S."/>
            <person name="Yoshikawa Y."/>
            <person name="Matsunawa H."/>
            <person name="Ichihara T."/>
            <person name="Shiohata N."/>
            <person name="Sano S."/>
            <person name="Moriya S."/>
            <person name="Momiyama H."/>
            <person name="Satoh N."/>
            <person name="Takami S."/>
            <person name="Terashima Y."/>
            <person name="Suzuki O."/>
            <person name="Nakagawa S."/>
            <person name="Senoh A."/>
            <person name="Mizoguchi H."/>
            <person name="Goto Y."/>
            <person name="Shimizu F."/>
            <person name="Wakebe H."/>
            <person name="Hishigaki H."/>
            <person name="Watanabe T."/>
            <person name="Sugiyama A."/>
            <person name="Takemoto M."/>
            <person name="Kawakami B."/>
            <person name="Yamazaki M."/>
            <person name="Watanabe K."/>
            <person name="Kumagai A."/>
            <person name="Itakura S."/>
            <person name="Fukuzumi Y."/>
            <person name="Fujimori Y."/>
            <person name="Komiyama M."/>
            <person name="Tashiro H."/>
            <person name="Tanigami A."/>
            <person name="Fujiwara T."/>
            <person name="Ono T."/>
            <person name="Yamada K."/>
            <person name="Fujii Y."/>
            <person name="Ozaki K."/>
            <person name="Hirao M."/>
            <person name="Ohmori Y."/>
            <person name="Kawabata A."/>
            <person name="Hikiji T."/>
            <person name="Kobatake N."/>
            <person name="Inagaki H."/>
            <person name="Ikema Y."/>
            <person name="Okamoto S."/>
            <person name="Okitani R."/>
            <person name="Kawakami T."/>
            <person name="Noguchi S."/>
            <person name="Itoh T."/>
            <person name="Shigeta K."/>
            <person name="Senba T."/>
            <person name="Matsumura K."/>
            <person name="Nakajima Y."/>
            <person name="Mizuno T."/>
            <person name="Morinaga M."/>
            <person name="Sasaki M."/>
            <person name="Togashi T."/>
            <person name="Oyama M."/>
            <person name="Hata H."/>
            <person name="Watanabe M."/>
            <person name="Komatsu T."/>
            <person name="Mizushima-Sugano J."/>
            <person name="Satoh T."/>
            <person name="Shirai Y."/>
            <person name="Takahashi Y."/>
            <person name="Nakagawa K."/>
            <person name="Okumura K."/>
            <person name="Nagase T."/>
            <person name="Nomura N."/>
            <person name="Kikuchi H."/>
            <person name="Masuho Y."/>
            <person name="Yamashita R."/>
            <person name="Nakai K."/>
            <person name="Yada T."/>
            <person name="Nakamura Y."/>
            <person name="Ohara O."/>
            <person name="Isogai T."/>
            <person name="Sugano S."/>
        </authorList>
    </citation>
    <scope>NUCLEOTIDE SEQUENCE [LARGE SCALE MRNA]</scope>
    <source>
        <tissue>Cerebellum</tissue>
    </source>
</reference>
<reference key="5">
    <citation type="submission" date="2003-05" db="EMBL/GenBank/DDBJ databases">
        <title>Cloning of human full-length CDSs in BD Creator(TM) system donor vector.</title>
        <authorList>
            <person name="Kalnine N."/>
            <person name="Chen X."/>
            <person name="Rolfs A."/>
            <person name="Halleck A."/>
            <person name="Hines L."/>
            <person name="Eisenstein S."/>
            <person name="Koundinya M."/>
            <person name="Raphael J."/>
            <person name="Moreira D."/>
            <person name="Kelley T."/>
            <person name="LaBaer J."/>
            <person name="Lin Y."/>
            <person name="Phelan M."/>
            <person name="Farmer A."/>
        </authorList>
    </citation>
    <scope>NUCLEOTIDE SEQUENCE [LARGE SCALE MRNA]</scope>
</reference>
<reference key="6">
    <citation type="submission" date="2004-06" db="EMBL/GenBank/DDBJ databases">
        <title>Cloning of human full open reading frames in Gateway(TM) system entry vector (pDONR201).</title>
        <authorList>
            <person name="Ebert L."/>
            <person name="Schick M."/>
            <person name="Neubert P."/>
            <person name="Schatten R."/>
            <person name="Henze S."/>
            <person name="Korn B."/>
        </authorList>
    </citation>
    <scope>NUCLEOTIDE SEQUENCE [LARGE SCALE MRNA]</scope>
</reference>
<reference key="7">
    <citation type="submission" date="2004-06" db="EMBL/GenBank/DDBJ databases">
        <title>Cloning of human full open reading frames in Gateway(TM) system entry vector (pDONR201).</title>
        <authorList>
            <person name="Halleck A."/>
            <person name="Ebert L."/>
            <person name="Mkoundinya M."/>
            <person name="Schick M."/>
            <person name="Eisenstein S."/>
            <person name="Neubert P."/>
            <person name="Kstrang K."/>
            <person name="Schatten R."/>
            <person name="Shen B."/>
            <person name="Henze S."/>
            <person name="Mar W."/>
            <person name="Korn B."/>
            <person name="Zuo D."/>
            <person name="Hu Y."/>
            <person name="LaBaer J."/>
        </authorList>
    </citation>
    <scope>NUCLEOTIDE SEQUENCE [LARGE SCALE MRNA]</scope>
</reference>
<reference key="8">
    <citation type="journal article" date="2004" name="Nature">
        <title>The DNA sequence and biology of human chromosome 19.</title>
        <authorList>
            <person name="Grimwood J."/>
            <person name="Gordon L.A."/>
            <person name="Olsen A.S."/>
            <person name="Terry A."/>
            <person name="Schmutz J."/>
            <person name="Lamerdin J.E."/>
            <person name="Hellsten U."/>
            <person name="Goodstein D."/>
            <person name="Couronne O."/>
            <person name="Tran-Gyamfi M."/>
            <person name="Aerts A."/>
            <person name="Altherr M."/>
            <person name="Ashworth L."/>
            <person name="Bajorek E."/>
            <person name="Black S."/>
            <person name="Branscomb E."/>
            <person name="Caenepeel S."/>
            <person name="Carrano A.V."/>
            <person name="Caoile C."/>
            <person name="Chan Y.M."/>
            <person name="Christensen M."/>
            <person name="Cleland C.A."/>
            <person name="Copeland A."/>
            <person name="Dalin E."/>
            <person name="Dehal P."/>
            <person name="Denys M."/>
            <person name="Detter J.C."/>
            <person name="Escobar J."/>
            <person name="Flowers D."/>
            <person name="Fotopulos D."/>
            <person name="Garcia C."/>
            <person name="Georgescu A.M."/>
            <person name="Glavina T."/>
            <person name="Gomez M."/>
            <person name="Gonzales E."/>
            <person name="Groza M."/>
            <person name="Hammon N."/>
            <person name="Hawkins T."/>
            <person name="Haydu L."/>
            <person name="Ho I."/>
            <person name="Huang W."/>
            <person name="Israni S."/>
            <person name="Jett J."/>
            <person name="Kadner K."/>
            <person name="Kimball H."/>
            <person name="Kobayashi A."/>
            <person name="Larionov V."/>
            <person name="Leem S.-H."/>
            <person name="Lopez F."/>
            <person name="Lou Y."/>
            <person name="Lowry S."/>
            <person name="Malfatti S."/>
            <person name="Martinez D."/>
            <person name="McCready P.M."/>
            <person name="Medina C."/>
            <person name="Morgan J."/>
            <person name="Nelson K."/>
            <person name="Nolan M."/>
            <person name="Ovcharenko I."/>
            <person name="Pitluck S."/>
            <person name="Pollard M."/>
            <person name="Popkie A.P."/>
            <person name="Predki P."/>
            <person name="Quan G."/>
            <person name="Ramirez L."/>
            <person name="Rash S."/>
            <person name="Retterer J."/>
            <person name="Rodriguez A."/>
            <person name="Rogers S."/>
            <person name="Salamov A."/>
            <person name="Salazar A."/>
            <person name="She X."/>
            <person name="Smith D."/>
            <person name="Slezak T."/>
            <person name="Solovyev V."/>
            <person name="Thayer N."/>
            <person name="Tice H."/>
            <person name="Tsai M."/>
            <person name="Ustaszewska A."/>
            <person name="Vo N."/>
            <person name="Wagner M."/>
            <person name="Wheeler J."/>
            <person name="Wu K."/>
            <person name="Xie G."/>
            <person name="Yang J."/>
            <person name="Dubchak I."/>
            <person name="Furey T.S."/>
            <person name="DeJong P."/>
            <person name="Dickson M."/>
            <person name="Gordon D."/>
            <person name="Eichler E.E."/>
            <person name="Pennacchio L.A."/>
            <person name="Richardson P."/>
            <person name="Stubbs L."/>
            <person name="Rokhsar D.S."/>
            <person name="Myers R.M."/>
            <person name="Rubin E.M."/>
            <person name="Lucas S.M."/>
        </authorList>
    </citation>
    <scope>NUCLEOTIDE SEQUENCE [LARGE SCALE GENOMIC DNA]</scope>
</reference>
<reference key="9">
    <citation type="journal article" date="2004" name="Genome Res.">
        <title>The status, quality, and expansion of the NIH full-length cDNA project: the Mammalian Gene Collection (MGC).</title>
        <authorList>
            <consortium name="The MGC Project Team"/>
        </authorList>
    </citation>
    <scope>NUCLEOTIDE SEQUENCE [LARGE SCALE MRNA]</scope>
    <source>
        <tissue>Eye</tissue>
        <tissue>Kidney</tissue>
    </source>
</reference>
<reference key="10">
    <citation type="journal article" date="1991" name="Biochim. Biophys. Acta">
        <title>Nucleotide sequence of the last exon of the gene for human cytochrome c oxidase subunit VIb and its flanking regions.</title>
        <authorList>
            <person name="Taanman J.-W."/>
            <person name="Schrage C."/>
            <person name="Bokma E."/>
            <person name="Reuvekamp P."/>
            <person name="Agsteribbe E."/>
            <person name="de Vries H."/>
        </authorList>
    </citation>
    <scope>NUCLEOTIDE SEQUENCE [GENOMIC DNA] OF 70-86</scope>
    <source>
        <tissue>Lymphocyte</tissue>
    </source>
</reference>
<reference key="11">
    <citation type="journal article" date="2011" name="BMC Syst. Biol.">
        <title>Initial characterization of the human central proteome.</title>
        <authorList>
            <person name="Burkard T.R."/>
            <person name="Planyavsky M."/>
            <person name="Kaupe I."/>
            <person name="Breitwieser F.P."/>
            <person name="Buerckstuemmer T."/>
            <person name="Bennett K.L."/>
            <person name="Superti-Furga G."/>
            <person name="Colinge J."/>
        </authorList>
    </citation>
    <scope>IDENTIFICATION BY MASS SPECTROMETRY [LARGE SCALE ANALYSIS]</scope>
</reference>
<reference key="12">
    <citation type="journal article" date="2012" name="Proc. Natl. Acad. Sci. U.S.A.">
        <title>N-terminal acetylome analyses and functional insights of the N-terminal acetyltransferase NatB.</title>
        <authorList>
            <person name="Van Damme P."/>
            <person name="Lasa M."/>
            <person name="Polevoda B."/>
            <person name="Gazquez C."/>
            <person name="Elosegui-Artola A."/>
            <person name="Kim D.S."/>
            <person name="De Juan-Pardo E."/>
            <person name="Demeyer K."/>
            <person name="Hole K."/>
            <person name="Larrea E."/>
            <person name="Timmerman E."/>
            <person name="Prieto J."/>
            <person name="Arnesen T."/>
            <person name="Sherman F."/>
            <person name="Gevaert K."/>
            <person name="Aldabe R."/>
        </authorList>
    </citation>
    <scope>ACETYLATION [LARGE SCALE ANALYSIS] AT ALA-2</scope>
    <scope>CLEAVAGE OF INITIATOR METHIONINE [LARGE SCALE ANALYSIS]</scope>
    <scope>IDENTIFICATION BY MASS SPECTROMETRY [LARGE SCALE ANALYSIS]</scope>
</reference>
<reference key="13">
    <citation type="journal article" date="2014" name="J. Proteomics">
        <title>An enzyme assisted RP-RPLC approach for in-depth analysis of human liver phosphoproteome.</title>
        <authorList>
            <person name="Bian Y."/>
            <person name="Song C."/>
            <person name="Cheng K."/>
            <person name="Dong M."/>
            <person name="Wang F."/>
            <person name="Huang J."/>
            <person name="Sun D."/>
            <person name="Wang L."/>
            <person name="Ye M."/>
            <person name="Zou H."/>
        </authorList>
    </citation>
    <scope>IDENTIFICATION BY MASS SPECTROMETRY [LARGE SCALE ANALYSIS]</scope>
    <source>
        <tissue>Liver</tissue>
    </source>
</reference>
<reference key="14">
    <citation type="journal article" date="2015" name="Proteomics">
        <title>N-terminome analysis of the human mitochondrial proteome.</title>
        <authorList>
            <person name="Vaca Jacome A.S."/>
            <person name="Rabilloud T."/>
            <person name="Schaeffer-Reiss C."/>
            <person name="Rompais M."/>
            <person name="Ayoub D."/>
            <person name="Lane L."/>
            <person name="Bairoch A."/>
            <person name="Van Dorsselaer A."/>
            <person name="Carapito C."/>
        </authorList>
    </citation>
    <scope>IDENTIFICATION BY MASS SPECTROMETRY [LARGE SCALE ANALYSIS]</scope>
</reference>
<reference key="15">
    <citation type="journal article" date="2017" name="Cell">
        <title>Architecture of human mitochondrial respiratory megacomplex I2III2IV2.</title>
        <authorList>
            <person name="Guo R."/>
            <person name="Zong S."/>
            <person name="Wu M."/>
            <person name="Gu J."/>
            <person name="Yang M."/>
        </authorList>
    </citation>
    <scope>STRUCTURE BY ELECTRON MICROSCOPY (3.90 ANGSTROMS)</scope>
    <scope>SUBUNIT</scope>
</reference>
<reference key="16">
    <citation type="journal article" date="2018" name="Cell Res.">
        <title>Structure of the intact 14-subunit human cytochrome c oxidase.</title>
        <authorList>
            <person name="Zong S."/>
            <person name="Wu M."/>
            <person name="Gu J."/>
            <person name="Liu T."/>
            <person name="Guo R."/>
            <person name="Yang M."/>
        </authorList>
    </citation>
    <scope>STRUCTURE BY ELECTRON MICROSCOPY (3.60 ANGSTROMS) OF 5-86</scope>
</reference>
<reference key="17">
    <citation type="journal article" date="2008" name="Am. J. Hum. Genet.">
        <title>Severe infantile encephalomyopathy caused by a mutation in COX6B1, a nucleus-encoded subunit of cytochrome c oxidase.</title>
        <authorList>
            <person name="Massa V."/>
            <person name="Fernandez-Vizarra E."/>
            <person name="Alshahwan S."/>
            <person name="Bakhsh E."/>
            <person name="Goffrini P."/>
            <person name="Ferrero I."/>
            <person name="Mereghetti P."/>
            <person name="D'Adamo P."/>
            <person name="Gasparini P."/>
            <person name="Zeviani M."/>
        </authorList>
    </citation>
    <scope>VARIANT MC4DN7 HIS-20</scope>
</reference>
<reference key="18">
    <citation type="journal article" date="2015" name="Eur. J. Hum. Genet.">
        <title>Mitochondrial complex IV deficiency, caused by mutated COX6B1, is associated with encephalomyopathy, hydrocephalus and cardiomyopathy.</title>
        <authorList>
            <person name="Abdulhag U.N."/>
            <person name="Soiferman D."/>
            <person name="Schueler-Furman O."/>
            <person name="Miller C."/>
            <person name="Shaag A."/>
            <person name="Elpeleg O."/>
            <person name="Edvardson S."/>
            <person name="Saada A."/>
        </authorList>
    </citation>
    <scope>VARIANT MC4DN7 CYS-20</scope>
    <scope>CHARACTERIZATION OF VARIANT MC4DN7 CYS-20</scope>
</reference>
<evidence type="ECO:0000250" key="1">
    <source>
        <dbReference type="UniProtKB" id="Q01519"/>
    </source>
</evidence>
<evidence type="ECO:0000255" key="2">
    <source>
        <dbReference type="PROSITE-ProRule" id="PRU01150"/>
    </source>
</evidence>
<evidence type="ECO:0000269" key="3">
    <source>
    </source>
</evidence>
<evidence type="ECO:0000269" key="4">
    <source>
    </source>
</evidence>
<evidence type="ECO:0000269" key="5">
    <source>
    </source>
</evidence>
<evidence type="ECO:0000269" key="6">
    <source>
    </source>
</evidence>
<evidence type="ECO:0000305" key="7"/>
<evidence type="ECO:0007744" key="8">
    <source>
    </source>
</evidence>
<organism>
    <name type="scientific">Homo sapiens</name>
    <name type="common">Human</name>
    <dbReference type="NCBI Taxonomy" id="9606"/>
    <lineage>
        <taxon>Eukaryota</taxon>
        <taxon>Metazoa</taxon>
        <taxon>Chordata</taxon>
        <taxon>Craniata</taxon>
        <taxon>Vertebrata</taxon>
        <taxon>Euteleostomi</taxon>
        <taxon>Mammalia</taxon>
        <taxon>Eutheria</taxon>
        <taxon>Euarchontoglires</taxon>
        <taxon>Primates</taxon>
        <taxon>Haplorrhini</taxon>
        <taxon>Catarrhini</taxon>
        <taxon>Hominidae</taxon>
        <taxon>Homo</taxon>
    </lineage>
</organism>
<keyword id="KW-0002">3D-structure</keyword>
<keyword id="KW-0007">Acetylation</keyword>
<keyword id="KW-0225">Disease variant</keyword>
<keyword id="KW-1015">Disulfide bond</keyword>
<keyword id="KW-0472">Membrane</keyword>
<keyword id="KW-0496">Mitochondrion</keyword>
<keyword id="KW-0999">Mitochondrion inner membrane</keyword>
<keyword id="KW-1274">Primary mitochondrial disease</keyword>
<keyword id="KW-1267">Proteomics identification</keyword>
<keyword id="KW-1185">Reference proteome</keyword>
<dbReference type="EMBL" id="X13923">
    <property type="protein sequence ID" value="CAA32114.1"/>
    <property type="molecule type" value="mRNA"/>
</dbReference>
<dbReference type="EMBL" id="X54473">
    <property type="protein sequence ID" value="CAA38352.1"/>
    <property type="molecule type" value="mRNA"/>
</dbReference>
<dbReference type="EMBL" id="AK312140">
    <property type="protein sequence ID" value="BAG35076.1"/>
    <property type="molecule type" value="mRNA"/>
</dbReference>
<dbReference type="EMBL" id="BT006945">
    <property type="protein sequence ID" value="AAP35591.1"/>
    <property type="molecule type" value="mRNA"/>
</dbReference>
<dbReference type="EMBL" id="CR456789">
    <property type="protein sequence ID" value="CAG33070.1"/>
    <property type="molecule type" value="mRNA"/>
</dbReference>
<dbReference type="EMBL" id="CR542137">
    <property type="protein sequence ID" value="CAG46934.1"/>
    <property type="molecule type" value="mRNA"/>
</dbReference>
<dbReference type="EMBL" id="AC002115">
    <property type="protein sequence ID" value="AAB57628.1"/>
    <property type="molecule type" value="Genomic_DNA"/>
</dbReference>
<dbReference type="EMBL" id="BC001015">
    <property type="protein sequence ID" value="AAH01015.1"/>
    <property type="molecule type" value="mRNA"/>
</dbReference>
<dbReference type="EMBL" id="BC002478">
    <property type="protein sequence ID" value="AAH02478.1"/>
    <property type="molecule type" value="mRNA"/>
</dbReference>
<dbReference type="EMBL" id="X58139">
    <property type="protein sequence ID" value="CAA41147.1"/>
    <property type="molecule type" value="Genomic_DNA"/>
</dbReference>
<dbReference type="CCDS" id="CCDS12469.1"/>
<dbReference type="PIR" id="S03287">
    <property type="entry name" value="OGHU6B"/>
</dbReference>
<dbReference type="RefSeq" id="NP_001854.1">
    <property type="nucleotide sequence ID" value="NM_001863.5"/>
</dbReference>
<dbReference type="PDB" id="5Z62">
    <property type="method" value="EM"/>
    <property type="resolution" value="3.60 A"/>
    <property type="chains" value="H=5-86"/>
</dbReference>
<dbReference type="PDBsum" id="5Z62"/>
<dbReference type="SMR" id="P14854"/>
<dbReference type="BioGRID" id="107733">
    <property type="interactions" value="112"/>
</dbReference>
<dbReference type="ComplexPortal" id="CPX-6123">
    <property type="entry name" value="Mitochondrial respiratory chain complex IV"/>
</dbReference>
<dbReference type="CORUM" id="P14854"/>
<dbReference type="FunCoup" id="P14854">
    <property type="interactions" value="1379"/>
</dbReference>
<dbReference type="IntAct" id="P14854">
    <property type="interactions" value="83"/>
</dbReference>
<dbReference type="MINT" id="P14854"/>
<dbReference type="STRING" id="9606.ENSP00000466818"/>
<dbReference type="DrugBank" id="DB02659">
    <property type="generic name" value="Cholic Acid"/>
</dbReference>
<dbReference type="DrugBank" id="DB04464">
    <property type="generic name" value="N-Formylmethionine"/>
</dbReference>
<dbReference type="GlyGen" id="P14854">
    <property type="glycosylation" value="1 site, 1 O-linked glycan (1 site)"/>
</dbReference>
<dbReference type="iPTMnet" id="P14854"/>
<dbReference type="PhosphoSitePlus" id="P14854"/>
<dbReference type="BioMuta" id="COX6B1"/>
<dbReference type="DMDM" id="117115"/>
<dbReference type="jPOST" id="P14854"/>
<dbReference type="MassIVE" id="P14854"/>
<dbReference type="PaxDb" id="9606-ENSP00000246554"/>
<dbReference type="PeptideAtlas" id="P14854"/>
<dbReference type="ProteomicsDB" id="53084"/>
<dbReference type="Pumba" id="P14854"/>
<dbReference type="TopDownProteomics" id="P14854"/>
<dbReference type="Antibodypedia" id="1083">
    <property type="antibodies" value="313 antibodies from 33 providers"/>
</dbReference>
<dbReference type="DNASU" id="1340"/>
<dbReference type="Ensembl" id="ENST00000392201.1">
    <property type="protein sequence ID" value="ENSP00000376037.2"/>
    <property type="gene ID" value="ENSG00000126267.11"/>
</dbReference>
<dbReference type="Ensembl" id="ENST00000592141.6">
    <property type="protein sequence ID" value="ENSP00000466818.2"/>
    <property type="gene ID" value="ENSG00000126267.11"/>
</dbReference>
<dbReference type="Ensembl" id="ENST00000649813.2">
    <property type="protein sequence ID" value="ENSP00000497926.1"/>
    <property type="gene ID" value="ENSG00000126267.11"/>
</dbReference>
<dbReference type="GeneID" id="1340"/>
<dbReference type="KEGG" id="hsa:1340"/>
<dbReference type="MANE-Select" id="ENST00000649813.2">
    <property type="protein sequence ID" value="ENSP00000497926.1"/>
    <property type="RefSeq nucleotide sequence ID" value="NM_001863.5"/>
    <property type="RefSeq protein sequence ID" value="NP_001854.1"/>
</dbReference>
<dbReference type="UCSC" id="uc002oav.4">
    <property type="organism name" value="human"/>
</dbReference>
<dbReference type="AGR" id="HGNC:2280"/>
<dbReference type="CTD" id="1340"/>
<dbReference type="DisGeNET" id="1340"/>
<dbReference type="GeneCards" id="COX6B1"/>
<dbReference type="HGNC" id="HGNC:2280">
    <property type="gene designation" value="COX6B1"/>
</dbReference>
<dbReference type="HPA" id="ENSG00000126267">
    <property type="expression patterns" value="Tissue enhanced (tongue)"/>
</dbReference>
<dbReference type="MalaCards" id="COX6B1"/>
<dbReference type="MIM" id="124089">
    <property type="type" value="gene"/>
</dbReference>
<dbReference type="MIM" id="619051">
    <property type="type" value="phenotype"/>
</dbReference>
<dbReference type="neXtProt" id="NX_P14854"/>
<dbReference type="OpenTargets" id="ENSG00000126267"/>
<dbReference type="Orphanet" id="254905">
    <property type="disease" value="Isolated cytochrome C oxidase deficiency"/>
</dbReference>
<dbReference type="PharmGKB" id="PA26797"/>
<dbReference type="VEuPathDB" id="HostDB:ENSG00000126267"/>
<dbReference type="eggNOG" id="KOG3057">
    <property type="taxonomic scope" value="Eukaryota"/>
</dbReference>
<dbReference type="GeneTree" id="ENSGT00940000156204"/>
<dbReference type="HOGENOM" id="CLU_133964_3_1_1"/>
<dbReference type="InParanoid" id="P14854"/>
<dbReference type="OMA" id="NEWIAKW"/>
<dbReference type="OrthoDB" id="1107506at2759"/>
<dbReference type="PAN-GO" id="P14854">
    <property type="GO annotations" value="3 GO annotations based on evolutionary models"/>
</dbReference>
<dbReference type="PhylomeDB" id="P14854"/>
<dbReference type="TreeFam" id="TF105065"/>
<dbReference type="BioCyc" id="MetaCyc:HS05010-MONOMER"/>
<dbReference type="PathwayCommons" id="P14854"/>
<dbReference type="Reactome" id="R-HSA-5628897">
    <property type="pathway name" value="TP53 Regulates Metabolic Genes"/>
</dbReference>
<dbReference type="Reactome" id="R-HSA-611105">
    <property type="pathway name" value="Respiratory electron transport"/>
</dbReference>
<dbReference type="Reactome" id="R-HSA-9707564">
    <property type="pathway name" value="Cytoprotection by HMOX1"/>
</dbReference>
<dbReference type="Reactome" id="R-HSA-9864848">
    <property type="pathway name" value="Complex IV assembly"/>
</dbReference>
<dbReference type="SignaLink" id="P14854"/>
<dbReference type="SIGNOR" id="P14854"/>
<dbReference type="UniPathway" id="UPA00705"/>
<dbReference type="BioGRID-ORCS" id="1340">
    <property type="hits" value="251 hits in 1153 CRISPR screens"/>
</dbReference>
<dbReference type="CD-CODE" id="FB4E32DD">
    <property type="entry name" value="Presynaptic clusters and postsynaptic densities"/>
</dbReference>
<dbReference type="ChiTaRS" id="COX6B1">
    <property type="organism name" value="human"/>
</dbReference>
<dbReference type="GeneWiki" id="COX6B1"/>
<dbReference type="GenomeRNAi" id="1340"/>
<dbReference type="Pharos" id="P14854">
    <property type="development level" value="Tbio"/>
</dbReference>
<dbReference type="PRO" id="PR:P14854"/>
<dbReference type="Proteomes" id="UP000005640">
    <property type="component" value="Chromosome 19"/>
</dbReference>
<dbReference type="RNAct" id="P14854">
    <property type="molecule type" value="protein"/>
</dbReference>
<dbReference type="Bgee" id="ENSG00000126267">
    <property type="expression patterns" value="Expressed in apex of heart and 208 other cell types or tissues"/>
</dbReference>
<dbReference type="ExpressionAtlas" id="P14854">
    <property type="expression patterns" value="baseline and differential"/>
</dbReference>
<dbReference type="GO" id="GO:0005743">
    <property type="term" value="C:mitochondrial inner membrane"/>
    <property type="evidence" value="ECO:0000318"/>
    <property type="project" value="GO_Central"/>
</dbReference>
<dbReference type="GO" id="GO:0031966">
    <property type="term" value="C:mitochondrial membrane"/>
    <property type="evidence" value="ECO:0000314"/>
    <property type="project" value="ComplexPortal"/>
</dbReference>
<dbReference type="GO" id="GO:0005739">
    <property type="term" value="C:mitochondrion"/>
    <property type="evidence" value="ECO:0000314"/>
    <property type="project" value="HPA"/>
</dbReference>
<dbReference type="GO" id="GO:0045277">
    <property type="term" value="C:respiratory chain complex IV"/>
    <property type="evidence" value="ECO:0000318"/>
    <property type="project" value="GO_Central"/>
</dbReference>
<dbReference type="GO" id="GO:0004129">
    <property type="term" value="F:cytochrome-c oxidase activity"/>
    <property type="evidence" value="ECO:0000303"/>
    <property type="project" value="UniProtKB"/>
</dbReference>
<dbReference type="GO" id="GO:0045333">
    <property type="term" value="P:cellular respiration"/>
    <property type="evidence" value="ECO:0000303"/>
    <property type="project" value="ComplexPortal"/>
</dbReference>
<dbReference type="GO" id="GO:0006123">
    <property type="term" value="P:mitochondrial electron transport, cytochrome c to oxygen"/>
    <property type="evidence" value="ECO:0000303"/>
    <property type="project" value="ComplexPortal"/>
</dbReference>
<dbReference type="GO" id="GO:0021762">
    <property type="term" value="P:substantia nigra development"/>
    <property type="evidence" value="ECO:0007007"/>
    <property type="project" value="UniProtKB"/>
</dbReference>
<dbReference type="CDD" id="cd00926">
    <property type="entry name" value="Cyt_c_Oxidase_VIb"/>
    <property type="match status" value="1"/>
</dbReference>
<dbReference type="FunFam" id="1.10.10.140:FF:000001">
    <property type="entry name" value="Cytochrome c oxidase subunit 6B1"/>
    <property type="match status" value="1"/>
</dbReference>
<dbReference type="Gene3D" id="1.10.10.140">
    <property type="entry name" value="Cytochrome c oxidase, subunit VIb"/>
    <property type="match status" value="1"/>
</dbReference>
<dbReference type="InterPro" id="IPR048280">
    <property type="entry name" value="COX6B-like"/>
</dbReference>
<dbReference type="InterPro" id="IPR036549">
    <property type="entry name" value="CX6/COA6-like_sf"/>
</dbReference>
<dbReference type="InterPro" id="IPR003213">
    <property type="entry name" value="Cyt_c_oxidase_su6B"/>
</dbReference>
<dbReference type="PANTHER" id="PTHR11387">
    <property type="entry name" value="CYTOCHROME C OXIDASE SUBUNIT 6B"/>
    <property type="match status" value="1"/>
</dbReference>
<dbReference type="Pfam" id="PF02297">
    <property type="entry name" value="COX6B"/>
    <property type="match status" value="1"/>
</dbReference>
<dbReference type="PIRSF" id="PIRSF000278">
    <property type="entry name" value="Cyt_c_oxidase_6B"/>
    <property type="match status" value="1"/>
</dbReference>
<dbReference type="SUPFAM" id="SSF47694">
    <property type="entry name" value="Cytochrome c oxidase subunit h"/>
    <property type="match status" value="1"/>
</dbReference>
<dbReference type="PROSITE" id="PS51808">
    <property type="entry name" value="CHCH"/>
    <property type="match status" value="1"/>
</dbReference>
<feature type="initiator methionine" description="Removed" evidence="8">
    <location>
        <position position="1"/>
    </location>
</feature>
<feature type="chain" id="PRO_0000194912" description="Cytochrome c oxidase subunit 6B1">
    <location>
        <begin position="2"/>
        <end position="86"/>
    </location>
</feature>
<feature type="domain" description="CHCH" evidence="2">
    <location>
        <begin position="27"/>
        <end position="73"/>
    </location>
</feature>
<feature type="short sequence motif" description="Cx9C motif" evidence="2">
    <location>
        <begin position="30"/>
        <end position="40"/>
    </location>
</feature>
<feature type="short sequence motif" description="Cx10C motif" evidence="2">
    <location>
        <begin position="54"/>
        <end position="65"/>
    </location>
</feature>
<feature type="modified residue" description="N-acetylalanine" evidence="8">
    <location>
        <position position="2"/>
    </location>
</feature>
<feature type="disulfide bond" evidence="2">
    <location>
        <begin position="30"/>
        <end position="65"/>
    </location>
</feature>
<feature type="disulfide bond" evidence="2">
    <location>
        <begin position="40"/>
        <end position="54"/>
    </location>
</feature>
<feature type="sequence variant" id="VAR_084178" description="In MC4DN7; severely reduced COX6B1 protein levels in patient muscle." evidence="4">
    <original>R</original>
    <variation>C</variation>
    <location>
        <position position="20"/>
    </location>
</feature>
<feature type="sequence variant" id="VAR_046775" description="In MC4DN7; dbSNP:rs121909602." evidence="3">
    <original>R</original>
    <variation>H</variation>
    <location>
        <position position="20"/>
    </location>
</feature>